<accession>Q8HVR8</accession>
<organism>
    <name type="scientific">Helenium bigelovii</name>
    <name type="common">Bigelow's sneezeweed</name>
    <name type="synonym">Helenium puberulum var. bigelovii</name>
    <dbReference type="NCBI Taxonomy" id="128739"/>
    <lineage>
        <taxon>Eukaryota</taxon>
        <taxon>Viridiplantae</taxon>
        <taxon>Streptophyta</taxon>
        <taxon>Embryophyta</taxon>
        <taxon>Tracheophyta</taxon>
        <taxon>Spermatophyta</taxon>
        <taxon>Magnoliopsida</taxon>
        <taxon>eudicotyledons</taxon>
        <taxon>Gunneridae</taxon>
        <taxon>Pentapetalae</taxon>
        <taxon>asterids</taxon>
        <taxon>campanulids</taxon>
        <taxon>Asterales</taxon>
        <taxon>Asteraceae</taxon>
        <taxon>Asteroideae</taxon>
        <taxon>Heliantheae alliance</taxon>
        <taxon>Helenieae</taxon>
        <taxon>Gaillardiinae</taxon>
        <taxon>Helenium</taxon>
    </lineage>
</organism>
<feature type="chain" id="PRO_0000250796" description="NAD(P)H-quinone oxidoreductase subunit I, chloroplastic">
    <location>
        <begin position="1"/>
        <end position="166"/>
    </location>
</feature>
<feature type="domain" description="4Fe-4S ferredoxin-type 1" evidence="1">
    <location>
        <begin position="55"/>
        <end position="84"/>
    </location>
</feature>
<feature type="domain" description="4Fe-4S ferredoxin-type 2" evidence="1">
    <location>
        <begin position="95"/>
        <end position="124"/>
    </location>
</feature>
<feature type="binding site" evidence="1">
    <location>
        <position position="64"/>
    </location>
    <ligand>
        <name>[4Fe-4S] cluster</name>
        <dbReference type="ChEBI" id="CHEBI:49883"/>
        <label>1</label>
    </ligand>
</feature>
<feature type="binding site" evidence="1">
    <location>
        <position position="67"/>
    </location>
    <ligand>
        <name>[4Fe-4S] cluster</name>
        <dbReference type="ChEBI" id="CHEBI:49883"/>
        <label>1</label>
    </ligand>
</feature>
<feature type="binding site" evidence="1">
    <location>
        <position position="70"/>
    </location>
    <ligand>
        <name>[4Fe-4S] cluster</name>
        <dbReference type="ChEBI" id="CHEBI:49883"/>
        <label>1</label>
    </ligand>
</feature>
<feature type="binding site" evidence="1">
    <location>
        <position position="74"/>
    </location>
    <ligand>
        <name>[4Fe-4S] cluster</name>
        <dbReference type="ChEBI" id="CHEBI:49883"/>
        <label>2</label>
    </ligand>
</feature>
<feature type="binding site" evidence="1">
    <location>
        <position position="104"/>
    </location>
    <ligand>
        <name>[4Fe-4S] cluster</name>
        <dbReference type="ChEBI" id="CHEBI:49883"/>
        <label>2</label>
    </ligand>
</feature>
<feature type="binding site" evidence="1">
    <location>
        <position position="107"/>
    </location>
    <ligand>
        <name>[4Fe-4S] cluster</name>
        <dbReference type="ChEBI" id="CHEBI:49883"/>
        <label>2</label>
    </ligand>
</feature>
<feature type="binding site" evidence="1">
    <location>
        <position position="110"/>
    </location>
    <ligand>
        <name>[4Fe-4S] cluster</name>
        <dbReference type="ChEBI" id="CHEBI:49883"/>
        <label>2</label>
    </ligand>
</feature>
<feature type="binding site" evidence="1">
    <location>
        <position position="114"/>
    </location>
    <ligand>
        <name>[4Fe-4S] cluster</name>
        <dbReference type="ChEBI" id="CHEBI:49883"/>
        <label>1</label>
    </ligand>
</feature>
<proteinExistence type="inferred from homology"/>
<evidence type="ECO:0000255" key="1">
    <source>
        <dbReference type="HAMAP-Rule" id="MF_01351"/>
    </source>
</evidence>
<reference key="1">
    <citation type="submission" date="2003-01" db="EMBL/GenBank/DDBJ databases">
        <title>Chloroplast DNA phylogeny of tribe Heliantheae (Asteraceae).</title>
        <authorList>
            <person name="Panero J.L."/>
            <person name="Baldwin B.G."/>
            <person name="Schilling E.E."/>
            <person name="Clevinger J.A."/>
        </authorList>
    </citation>
    <scope>NUCLEOTIDE SEQUENCE [GENOMIC DNA]</scope>
</reference>
<dbReference type="EC" id="7.1.1.-" evidence="1"/>
<dbReference type="EMBL" id="AF383795">
    <property type="protein sequence ID" value="AAN61736.1"/>
    <property type="molecule type" value="Genomic_DNA"/>
</dbReference>
<dbReference type="SMR" id="Q8HVR8"/>
<dbReference type="GO" id="GO:0009535">
    <property type="term" value="C:chloroplast thylakoid membrane"/>
    <property type="evidence" value="ECO:0007669"/>
    <property type="project" value="UniProtKB-SubCell"/>
</dbReference>
<dbReference type="GO" id="GO:0051539">
    <property type="term" value="F:4 iron, 4 sulfur cluster binding"/>
    <property type="evidence" value="ECO:0007669"/>
    <property type="project" value="UniProtKB-KW"/>
</dbReference>
<dbReference type="GO" id="GO:0005506">
    <property type="term" value="F:iron ion binding"/>
    <property type="evidence" value="ECO:0007669"/>
    <property type="project" value="UniProtKB-UniRule"/>
</dbReference>
<dbReference type="GO" id="GO:0008137">
    <property type="term" value="F:NADH dehydrogenase (ubiquinone) activity"/>
    <property type="evidence" value="ECO:0007669"/>
    <property type="project" value="InterPro"/>
</dbReference>
<dbReference type="GO" id="GO:0048038">
    <property type="term" value="F:quinone binding"/>
    <property type="evidence" value="ECO:0007669"/>
    <property type="project" value="UniProtKB-KW"/>
</dbReference>
<dbReference type="GO" id="GO:0019684">
    <property type="term" value="P:photosynthesis, light reaction"/>
    <property type="evidence" value="ECO:0007669"/>
    <property type="project" value="UniProtKB-UniRule"/>
</dbReference>
<dbReference type="FunFam" id="3.30.70.3270:FF:000006">
    <property type="entry name" value="NAD(P)H-quinone oxidoreductase subunit I, chloroplastic"/>
    <property type="match status" value="1"/>
</dbReference>
<dbReference type="Gene3D" id="3.30.70.3270">
    <property type="match status" value="1"/>
</dbReference>
<dbReference type="HAMAP" id="MF_01351">
    <property type="entry name" value="NDH1_NuoI"/>
    <property type="match status" value="1"/>
</dbReference>
<dbReference type="InterPro" id="IPR017896">
    <property type="entry name" value="4Fe4S_Fe-S-bd"/>
</dbReference>
<dbReference type="InterPro" id="IPR017900">
    <property type="entry name" value="4Fe4S_Fe_S_CS"/>
</dbReference>
<dbReference type="InterPro" id="IPR010226">
    <property type="entry name" value="NADH_quinone_OxRdtase_chainI"/>
</dbReference>
<dbReference type="InterPro" id="IPR004497">
    <property type="entry name" value="NDHI"/>
</dbReference>
<dbReference type="NCBIfam" id="TIGR00403">
    <property type="entry name" value="ndhI"/>
    <property type="match status" value="1"/>
</dbReference>
<dbReference type="NCBIfam" id="TIGR01971">
    <property type="entry name" value="NuoI"/>
    <property type="match status" value="1"/>
</dbReference>
<dbReference type="NCBIfam" id="NF004537">
    <property type="entry name" value="PRK05888.1-3"/>
    <property type="match status" value="1"/>
</dbReference>
<dbReference type="PANTHER" id="PTHR47275">
    <property type="entry name" value="NAD(P)H-QUINONE OXIDOREDUCTASE SUBUNIT I, CHLOROPLASTIC"/>
    <property type="match status" value="1"/>
</dbReference>
<dbReference type="PANTHER" id="PTHR47275:SF1">
    <property type="entry name" value="NAD(P)H-QUINONE OXIDOREDUCTASE SUBUNIT I, CHLOROPLASTIC"/>
    <property type="match status" value="1"/>
</dbReference>
<dbReference type="Pfam" id="PF00037">
    <property type="entry name" value="Fer4"/>
    <property type="match status" value="2"/>
</dbReference>
<dbReference type="SUPFAM" id="SSF54862">
    <property type="entry name" value="4Fe-4S ferredoxins"/>
    <property type="match status" value="1"/>
</dbReference>
<dbReference type="PROSITE" id="PS00198">
    <property type="entry name" value="4FE4S_FER_1"/>
    <property type="match status" value="2"/>
</dbReference>
<dbReference type="PROSITE" id="PS51379">
    <property type="entry name" value="4FE4S_FER_2"/>
    <property type="match status" value="2"/>
</dbReference>
<sequence length="166" mass="19451">MFPMVTEFMNYGQQTVRAARYIGQGFMITLSHANRLPVTIQYPYEKLITSERFRGRIHFEFDKCIACEVCVRVCPIDLPVVDWKLETDIRKKRLLNYSIDFGICIFCGNCVEYCPTNCLSMTEEYELSTYDRHELNYNQIALGRLPMSVIDDYTIRTILNLSEIKT</sequence>
<protein>
    <recommendedName>
        <fullName evidence="1">NAD(P)H-quinone oxidoreductase subunit I, chloroplastic</fullName>
        <ecNumber evidence="1">7.1.1.-</ecNumber>
    </recommendedName>
    <alternativeName>
        <fullName evidence="1">NAD(P)H dehydrogenase subunit I</fullName>
        <shortName evidence="1">NDH subunit I</shortName>
    </alternativeName>
    <alternativeName>
        <fullName evidence="1">NADH-plastoquinone oxidoreductase subunit I</fullName>
    </alternativeName>
</protein>
<name>NDHI_HELBG</name>
<comment type="function">
    <text evidence="1">NDH shuttles electrons from NAD(P)H:plastoquinone, via FMN and iron-sulfur (Fe-S) centers, to quinones in the photosynthetic chain and possibly in a chloroplast respiratory chain. The immediate electron acceptor for the enzyme in this species is believed to be plastoquinone. Couples the redox reaction to proton translocation, and thus conserves the redox energy in a proton gradient.</text>
</comment>
<comment type="catalytic activity">
    <reaction evidence="1">
        <text>a plastoquinone + NADH + (n+1) H(+)(in) = a plastoquinol + NAD(+) + n H(+)(out)</text>
        <dbReference type="Rhea" id="RHEA:42608"/>
        <dbReference type="Rhea" id="RHEA-COMP:9561"/>
        <dbReference type="Rhea" id="RHEA-COMP:9562"/>
        <dbReference type="ChEBI" id="CHEBI:15378"/>
        <dbReference type="ChEBI" id="CHEBI:17757"/>
        <dbReference type="ChEBI" id="CHEBI:57540"/>
        <dbReference type="ChEBI" id="CHEBI:57945"/>
        <dbReference type="ChEBI" id="CHEBI:62192"/>
    </reaction>
</comment>
<comment type="catalytic activity">
    <reaction evidence="1">
        <text>a plastoquinone + NADPH + (n+1) H(+)(in) = a plastoquinol + NADP(+) + n H(+)(out)</text>
        <dbReference type="Rhea" id="RHEA:42612"/>
        <dbReference type="Rhea" id="RHEA-COMP:9561"/>
        <dbReference type="Rhea" id="RHEA-COMP:9562"/>
        <dbReference type="ChEBI" id="CHEBI:15378"/>
        <dbReference type="ChEBI" id="CHEBI:17757"/>
        <dbReference type="ChEBI" id="CHEBI:57783"/>
        <dbReference type="ChEBI" id="CHEBI:58349"/>
        <dbReference type="ChEBI" id="CHEBI:62192"/>
    </reaction>
</comment>
<comment type="cofactor">
    <cofactor evidence="1">
        <name>[4Fe-4S] cluster</name>
        <dbReference type="ChEBI" id="CHEBI:49883"/>
    </cofactor>
    <text evidence="1">Binds 2 [4Fe-4S] clusters per subunit.</text>
</comment>
<comment type="subunit">
    <text evidence="1">NDH is composed of at least 16 different subunits, 5 of which are encoded in the nucleus.</text>
</comment>
<comment type="subcellular location">
    <subcellularLocation>
        <location evidence="1">Plastid</location>
        <location evidence="1">Chloroplast thylakoid membrane</location>
        <topology evidence="1">Peripheral membrane protein</topology>
    </subcellularLocation>
</comment>
<comment type="similarity">
    <text evidence="1">Belongs to the complex I 23 kDa subunit family.</text>
</comment>
<gene>
    <name evidence="1" type="primary">ndhI</name>
</gene>
<keyword id="KW-0004">4Fe-4S</keyword>
<keyword id="KW-0150">Chloroplast</keyword>
<keyword id="KW-0408">Iron</keyword>
<keyword id="KW-0411">Iron-sulfur</keyword>
<keyword id="KW-0472">Membrane</keyword>
<keyword id="KW-0479">Metal-binding</keyword>
<keyword id="KW-0520">NAD</keyword>
<keyword id="KW-0521">NADP</keyword>
<keyword id="KW-0934">Plastid</keyword>
<keyword id="KW-0618">Plastoquinone</keyword>
<keyword id="KW-0874">Quinone</keyword>
<keyword id="KW-0677">Repeat</keyword>
<keyword id="KW-0793">Thylakoid</keyword>
<keyword id="KW-1278">Translocase</keyword>
<geneLocation type="chloroplast"/>